<evidence type="ECO:0000255" key="1">
    <source>
        <dbReference type="HAMAP-Rule" id="MF_01341"/>
    </source>
</evidence>
<evidence type="ECO:0000256" key="2">
    <source>
        <dbReference type="SAM" id="MobiDB-lite"/>
    </source>
</evidence>
<evidence type="ECO:0000305" key="3"/>
<organism>
    <name type="scientific">Corynebacterium glutamicum (strain ATCC 13032 / DSM 20300 / JCM 1318 / BCRC 11384 / CCUG 27702 / LMG 3730 / NBRC 12168 / NCIMB 10025 / NRRL B-2784 / 534)</name>
    <dbReference type="NCBI Taxonomy" id="196627"/>
    <lineage>
        <taxon>Bacteria</taxon>
        <taxon>Bacillati</taxon>
        <taxon>Actinomycetota</taxon>
        <taxon>Actinomycetes</taxon>
        <taxon>Mycobacteriales</taxon>
        <taxon>Corynebacteriaceae</taxon>
        <taxon>Corynebacterium</taxon>
    </lineage>
</organism>
<feature type="chain" id="PRO_0000104710" description="Large ribosomal subunit protein uL15">
    <location>
        <begin position="1"/>
        <end position="148"/>
    </location>
</feature>
<feature type="region of interest" description="Disordered" evidence="2">
    <location>
        <begin position="1"/>
        <end position="52"/>
    </location>
</feature>
<feature type="compositionally biased region" description="Basic and acidic residues" evidence="2">
    <location>
        <begin position="1"/>
        <end position="11"/>
    </location>
</feature>
<reference key="1">
    <citation type="journal article" date="2003" name="Appl. Microbiol. Biotechnol.">
        <title>The Corynebacterium glutamicum genome: features and impacts on biotechnological processes.</title>
        <authorList>
            <person name="Ikeda M."/>
            <person name="Nakagawa S."/>
        </authorList>
    </citation>
    <scope>NUCLEOTIDE SEQUENCE [LARGE SCALE GENOMIC DNA]</scope>
    <source>
        <strain>ATCC 13032 / DSM 20300 / JCM 1318 / BCRC 11384 / CCUG 27702 / LMG 3730 / NBRC 12168 / NCIMB 10025 / NRRL B-2784 / 534</strain>
    </source>
</reference>
<reference key="2">
    <citation type="journal article" date="2003" name="J. Biotechnol.">
        <title>The complete Corynebacterium glutamicum ATCC 13032 genome sequence and its impact on the production of L-aspartate-derived amino acids and vitamins.</title>
        <authorList>
            <person name="Kalinowski J."/>
            <person name="Bathe B."/>
            <person name="Bartels D."/>
            <person name="Bischoff N."/>
            <person name="Bott M."/>
            <person name="Burkovski A."/>
            <person name="Dusch N."/>
            <person name="Eggeling L."/>
            <person name="Eikmanns B.J."/>
            <person name="Gaigalat L."/>
            <person name="Goesmann A."/>
            <person name="Hartmann M."/>
            <person name="Huthmacher K."/>
            <person name="Kraemer R."/>
            <person name="Linke B."/>
            <person name="McHardy A.C."/>
            <person name="Meyer F."/>
            <person name="Moeckel B."/>
            <person name="Pfefferle W."/>
            <person name="Puehler A."/>
            <person name="Rey D.A."/>
            <person name="Rueckert C."/>
            <person name="Rupp O."/>
            <person name="Sahm H."/>
            <person name="Wendisch V.F."/>
            <person name="Wiegraebe I."/>
            <person name="Tauch A."/>
        </authorList>
    </citation>
    <scope>NUCLEOTIDE SEQUENCE [LARGE SCALE GENOMIC DNA]</scope>
    <source>
        <strain>ATCC 13032 / DSM 20300 / JCM 1318 / BCRC 11384 / CCUG 27702 / LMG 3730 / NBRC 12168 / NCIMB 10025 / NRRL B-2784 / 534</strain>
    </source>
</reference>
<keyword id="KW-1185">Reference proteome</keyword>
<keyword id="KW-0687">Ribonucleoprotein</keyword>
<keyword id="KW-0689">Ribosomal protein</keyword>
<keyword id="KW-0694">RNA-binding</keyword>
<keyword id="KW-0699">rRNA-binding</keyword>
<dbReference type="EMBL" id="BA000036">
    <property type="protein sequence ID" value="BAB97936.1"/>
    <property type="molecule type" value="Genomic_DNA"/>
</dbReference>
<dbReference type="EMBL" id="BX927149">
    <property type="protein sequence ID" value="CAF19250.1"/>
    <property type="molecule type" value="Genomic_DNA"/>
</dbReference>
<dbReference type="RefSeq" id="NP_599781.1">
    <property type="nucleotide sequence ID" value="NC_003450.3"/>
</dbReference>
<dbReference type="RefSeq" id="WP_011013717.1">
    <property type="nucleotide sequence ID" value="NC_006958.1"/>
</dbReference>
<dbReference type="SMR" id="P0C544"/>
<dbReference type="STRING" id="196627.cg0634"/>
<dbReference type="GeneID" id="1021539"/>
<dbReference type="KEGG" id="cgb:cg0634"/>
<dbReference type="KEGG" id="cgl:Cgl0542"/>
<dbReference type="PATRIC" id="fig|196627.13.peg.536"/>
<dbReference type="eggNOG" id="COG0200">
    <property type="taxonomic scope" value="Bacteria"/>
</dbReference>
<dbReference type="HOGENOM" id="CLU_055188_4_1_11"/>
<dbReference type="OrthoDB" id="9810293at2"/>
<dbReference type="BioCyc" id="CORYNE:G18NG-10105-MONOMER"/>
<dbReference type="Proteomes" id="UP000000582">
    <property type="component" value="Chromosome"/>
</dbReference>
<dbReference type="Proteomes" id="UP000001009">
    <property type="component" value="Chromosome"/>
</dbReference>
<dbReference type="GO" id="GO:0022625">
    <property type="term" value="C:cytosolic large ribosomal subunit"/>
    <property type="evidence" value="ECO:0007669"/>
    <property type="project" value="TreeGrafter"/>
</dbReference>
<dbReference type="GO" id="GO:0019843">
    <property type="term" value="F:rRNA binding"/>
    <property type="evidence" value="ECO:0007669"/>
    <property type="project" value="UniProtKB-UniRule"/>
</dbReference>
<dbReference type="GO" id="GO:0003735">
    <property type="term" value="F:structural constituent of ribosome"/>
    <property type="evidence" value="ECO:0007669"/>
    <property type="project" value="InterPro"/>
</dbReference>
<dbReference type="GO" id="GO:0006412">
    <property type="term" value="P:translation"/>
    <property type="evidence" value="ECO:0007669"/>
    <property type="project" value="UniProtKB-UniRule"/>
</dbReference>
<dbReference type="FunFam" id="3.100.10.10:FF:000005">
    <property type="entry name" value="50S ribosomal protein L15"/>
    <property type="match status" value="1"/>
</dbReference>
<dbReference type="Gene3D" id="3.100.10.10">
    <property type="match status" value="1"/>
</dbReference>
<dbReference type="HAMAP" id="MF_01341">
    <property type="entry name" value="Ribosomal_uL15"/>
    <property type="match status" value="1"/>
</dbReference>
<dbReference type="InterPro" id="IPR030878">
    <property type="entry name" value="Ribosomal_uL15"/>
</dbReference>
<dbReference type="InterPro" id="IPR021131">
    <property type="entry name" value="Ribosomal_uL15/eL18"/>
</dbReference>
<dbReference type="InterPro" id="IPR036227">
    <property type="entry name" value="Ribosomal_uL15/eL18_sf"/>
</dbReference>
<dbReference type="InterPro" id="IPR005749">
    <property type="entry name" value="Ribosomal_uL15_bac-type"/>
</dbReference>
<dbReference type="InterPro" id="IPR001196">
    <property type="entry name" value="Ribosomal_uL15_CS"/>
</dbReference>
<dbReference type="NCBIfam" id="TIGR01071">
    <property type="entry name" value="rplO_bact"/>
    <property type="match status" value="1"/>
</dbReference>
<dbReference type="PANTHER" id="PTHR12934">
    <property type="entry name" value="50S RIBOSOMAL PROTEIN L15"/>
    <property type="match status" value="1"/>
</dbReference>
<dbReference type="PANTHER" id="PTHR12934:SF11">
    <property type="entry name" value="LARGE RIBOSOMAL SUBUNIT PROTEIN UL15M"/>
    <property type="match status" value="1"/>
</dbReference>
<dbReference type="Pfam" id="PF00828">
    <property type="entry name" value="Ribosomal_L27A"/>
    <property type="match status" value="1"/>
</dbReference>
<dbReference type="SUPFAM" id="SSF52080">
    <property type="entry name" value="Ribosomal proteins L15p and L18e"/>
    <property type="match status" value="1"/>
</dbReference>
<dbReference type="PROSITE" id="PS00475">
    <property type="entry name" value="RIBOSOMAL_L15"/>
    <property type="match status" value="1"/>
</dbReference>
<comment type="function">
    <text evidence="1">Binds to the 23S rRNA.</text>
</comment>
<comment type="subunit">
    <text evidence="1">Part of the 50S ribosomal subunit.</text>
</comment>
<comment type="similarity">
    <text evidence="1">Belongs to the universal ribosomal protein uL15 family.</text>
</comment>
<protein>
    <recommendedName>
        <fullName evidence="1">Large ribosomal subunit protein uL15</fullName>
    </recommendedName>
    <alternativeName>
        <fullName evidence="3">50S ribosomal protein L15</fullName>
    </alternativeName>
</protein>
<sequence length="148" mass="15427">MSEPIKLHDLRPAAGSNKAKTRVGRGEASKGKTAGRGTKGTKARKQVSAAFEGGQMPLQMRLPKLKGFKNPNKVDYQVVNIADLAEKFPQGGDVSIADIVAAGLVRKNELVKVLGNGDISVKLNVTANKFSGSAKEKIEAAGGSATVA</sequence>
<gene>
    <name evidence="1" type="primary">rplO</name>
    <name type="ordered locus">Cgl0542</name>
    <name type="ordered locus">cg0634</name>
</gene>
<name>RL15_CORGL</name>
<accession>P0C544</accession>
<accession>Q6M7K8</accession>
<accession>Q8NSX2</accession>
<proteinExistence type="inferred from homology"/>